<proteinExistence type="evidence at protein level"/>
<dbReference type="EC" id="2.7.11.11" evidence="10 15"/>
<dbReference type="EMBL" id="M34181">
    <property type="protein sequence ID" value="AAA60170.1"/>
    <property type="molecule type" value="mRNA"/>
</dbReference>
<dbReference type="EMBL" id="BX537705">
    <property type="protein sequence ID" value="CAD97818.1"/>
    <property type="molecule type" value="mRNA"/>
</dbReference>
<dbReference type="EMBL" id="BX641026">
    <property type="protein sequence ID" value="CAE46017.1"/>
    <property type="molecule type" value="mRNA"/>
</dbReference>
<dbReference type="EMBL" id="AB209189">
    <property type="protein sequence ID" value="BAD92426.1"/>
    <property type="status" value="ALT_SEQ"/>
    <property type="molecule type" value="mRNA"/>
</dbReference>
<dbReference type="EMBL" id="CR936631">
    <property type="protein sequence ID" value="CAI56774.1"/>
    <property type="molecule type" value="mRNA"/>
</dbReference>
<dbReference type="EMBL" id="AK091420">
    <property type="protein sequence ID" value="BAG52356.1"/>
    <property type="molecule type" value="mRNA"/>
</dbReference>
<dbReference type="EMBL" id="AK296482">
    <property type="protein sequence ID" value="BAG59122.1"/>
    <property type="molecule type" value="mRNA"/>
</dbReference>
<dbReference type="EMBL" id="AK304375">
    <property type="protein sequence ID" value="BAG65213.1"/>
    <property type="molecule type" value="mRNA"/>
</dbReference>
<dbReference type="EMBL" id="DQ667174">
    <property type="protein sequence ID" value="ABG25919.1"/>
    <property type="molecule type" value="Genomic_DNA"/>
</dbReference>
<dbReference type="EMBL" id="AL359504">
    <property type="status" value="NOT_ANNOTATED_CDS"/>
    <property type="molecule type" value="Genomic_DNA"/>
</dbReference>
<dbReference type="EMBL" id="AL450063">
    <property type="status" value="NOT_ANNOTATED_CDS"/>
    <property type="molecule type" value="Genomic_DNA"/>
</dbReference>
<dbReference type="EMBL" id="CH471097">
    <property type="protein sequence ID" value="EAW73248.1"/>
    <property type="molecule type" value="Genomic_DNA"/>
</dbReference>
<dbReference type="EMBL" id="BC016285">
    <property type="protein sequence ID" value="AAH16285.1"/>
    <property type="molecule type" value="mRNA"/>
</dbReference>
<dbReference type="EMBL" id="BC035058">
    <property type="protein sequence ID" value="AAH35058.1"/>
    <property type="molecule type" value="mRNA"/>
</dbReference>
<dbReference type="EMBL" id="AY927364">
    <property type="protein sequence ID" value="AAX19487.1"/>
    <property type="molecule type" value="mRNA"/>
</dbReference>
<dbReference type="EMBL" id="AY927365">
    <property type="protein sequence ID" value="AAX19488.1"/>
    <property type="molecule type" value="mRNA"/>
</dbReference>
<dbReference type="EMBL" id="AY927366">
    <property type="protein sequence ID" value="AAX19489.1"/>
    <property type="molecule type" value="mRNA"/>
</dbReference>
<dbReference type="EMBL" id="AY927367">
    <property type="protein sequence ID" value="AAX19490.1"/>
    <property type="molecule type" value="mRNA"/>
</dbReference>
<dbReference type="EMBL" id="AY927368">
    <property type="protein sequence ID" value="AAX19491.1"/>
    <property type="molecule type" value="mRNA"/>
</dbReference>
<dbReference type="EMBL" id="AF538872">
    <property type="protein sequence ID" value="AAN16454.1"/>
    <property type="molecule type" value="Genomic_DNA"/>
</dbReference>
<dbReference type="CCDS" id="CCDS55609.1">
    <molecule id="P22694-9"/>
</dbReference>
<dbReference type="CCDS" id="CCDS55610.1">
    <molecule id="P22694-7"/>
</dbReference>
<dbReference type="CCDS" id="CCDS55611.1">
    <molecule id="P22694-10"/>
</dbReference>
<dbReference type="CCDS" id="CCDS691.1">
    <molecule id="P22694-1"/>
</dbReference>
<dbReference type="CCDS" id="CCDS692.1">
    <molecule id="P22694-8"/>
</dbReference>
<dbReference type="CCDS" id="CCDS693.1">
    <molecule id="P22694-2"/>
</dbReference>
<dbReference type="CCDS" id="CCDS72813.1">
    <molecule id="P22694-3"/>
</dbReference>
<dbReference type="CCDS" id="CCDS72815.1">
    <molecule id="P22694-6"/>
</dbReference>
<dbReference type="PIR" id="A34724">
    <property type="entry name" value="OKHUCB"/>
</dbReference>
<dbReference type="RefSeq" id="NP_001229786.1">
    <molecule id="P22694-9"/>
    <property type="nucleotide sequence ID" value="NM_001242857.3"/>
</dbReference>
<dbReference type="RefSeq" id="NP_001229787.1">
    <molecule id="P22694-3"/>
    <property type="nucleotide sequence ID" value="NM_001242858.3"/>
</dbReference>
<dbReference type="RefSeq" id="NP_001229788.1">
    <molecule id="P22694-7"/>
    <property type="nucleotide sequence ID" value="NM_001242859.3"/>
</dbReference>
<dbReference type="RefSeq" id="NP_001229789.1">
    <molecule id="P22694-6"/>
    <property type="nucleotide sequence ID" value="NM_001242860.3"/>
</dbReference>
<dbReference type="RefSeq" id="NP_001229790.1">
    <molecule id="P22694-10"/>
    <property type="nucleotide sequence ID" value="NM_001242861.3"/>
</dbReference>
<dbReference type="RefSeq" id="NP_001229791.1">
    <property type="nucleotide sequence ID" value="NM_001242862.2"/>
</dbReference>
<dbReference type="RefSeq" id="NP_001287844.1">
    <property type="nucleotide sequence ID" value="NM_001300915.1"/>
</dbReference>
<dbReference type="RefSeq" id="NP_001287845.1">
    <property type="nucleotide sequence ID" value="NM_001300916.1"/>
</dbReference>
<dbReference type="RefSeq" id="NP_001287846.1">
    <property type="nucleotide sequence ID" value="NM_001300917.1"/>
</dbReference>
<dbReference type="RefSeq" id="NP_001362489.1">
    <molecule id="P22694-5"/>
    <property type="nucleotide sequence ID" value="NM_001375560.1"/>
</dbReference>
<dbReference type="RefSeq" id="NP_001362494.1">
    <molecule id="P22694-4"/>
    <property type="nucleotide sequence ID" value="NM_001375565.1"/>
</dbReference>
<dbReference type="RefSeq" id="NP_002722.1">
    <molecule id="P22694-1"/>
    <property type="nucleotide sequence ID" value="NM_002731.4"/>
</dbReference>
<dbReference type="RefSeq" id="NP_891993.1">
    <molecule id="P22694-2"/>
    <property type="nucleotide sequence ID" value="NM_182948.4"/>
</dbReference>
<dbReference type="RefSeq" id="NP_997461.1">
    <molecule id="P22694-8"/>
    <property type="nucleotide sequence ID" value="NM_207578.3"/>
</dbReference>
<dbReference type="RefSeq" id="XP_005271076.1">
    <property type="nucleotide sequence ID" value="XM_005271019.1"/>
</dbReference>
<dbReference type="RefSeq" id="XP_006710821.1">
    <property type="nucleotide sequence ID" value="XM_006710758.1"/>
</dbReference>
<dbReference type="SMR" id="P22694"/>
<dbReference type="BioGRID" id="111554">
    <property type="interactions" value="185"/>
</dbReference>
<dbReference type="FunCoup" id="P22694">
    <property type="interactions" value="3943"/>
</dbReference>
<dbReference type="IntAct" id="P22694">
    <property type="interactions" value="111"/>
</dbReference>
<dbReference type="MINT" id="P22694"/>
<dbReference type="STRING" id="9606.ENSP00000359719"/>
<dbReference type="BindingDB" id="P22694"/>
<dbReference type="ChEMBL" id="CHEMBL2918"/>
<dbReference type="DrugBank" id="DB12010">
    <property type="generic name" value="Fostamatinib"/>
</dbReference>
<dbReference type="DrugBank" id="DB02482">
    <property type="generic name" value="Phosphonothreonine"/>
</dbReference>
<dbReference type="DrugCentral" id="P22694"/>
<dbReference type="GuidetoPHARMACOLOGY" id="1477"/>
<dbReference type="GlyGen" id="P22694">
    <property type="glycosylation" value="1 site, 1 O-linked glycan (1 site)"/>
</dbReference>
<dbReference type="iPTMnet" id="P22694"/>
<dbReference type="MetOSite" id="P22694"/>
<dbReference type="PhosphoSitePlus" id="P22694"/>
<dbReference type="SwissPalm" id="P22694"/>
<dbReference type="BioMuta" id="PRKACB"/>
<dbReference type="DMDM" id="125210"/>
<dbReference type="CPTAC" id="non-CPTAC-3182"/>
<dbReference type="jPOST" id="P22694"/>
<dbReference type="MassIVE" id="P22694"/>
<dbReference type="PaxDb" id="9606-ENSP00000359719"/>
<dbReference type="PeptideAtlas" id="P22694"/>
<dbReference type="ProteomicsDB" id="3296"/>
<dbReference type="ProteomicsDB" id="54019">
    <molecule id="P22694-1"/>
</dbReference>
<dbReference type="ProteomicsDB" id="54020">
    <molecule id="P22694-2"/>
</dbReference>
<dbReference type="ProteomicsDB" id="54021">
    <molecule id="P22694-3"/>
</dbReference>
<dbReference type="ProteomicsDB" id="54022">
    <molecule id="P22694-4"/>
</dbReference>
<dbReference type="ProteomicsDB" id="54023">
    <molecule id="P22694-5"/>
</dbReference>
<dbReference type="ProteomicsDB" id="54024">
    <molecule id="P22694-6"/>
</dbReference>
<dbReference type="ProteomicsDB" id="54025">
    <molecule id="P22694-7"/>
</dbReference>
<dbReference type="ProteomicsDB" id="54026">
    <molecule id="P22694-8"/>
</dbReference>
<dbReference type="ProteomicsDB" id="54027">
    <molecule id="P22694-9"/>
</dbReference>
<dbReference type="Pumba" id="P22694"/>
<dbReference type="Antibodypedia" id="4160">
    <property type="antibodies" value="406 antibodies from 36 providers"/>
</dbReference>
<dbReference type="DNASU" id="5567"/>
<dbReference type="Ensembl" id="ENST00000370685.7">
    <molecule id="P22694-2"/>
    <property type="protein sequence ID" value="ENSP00000359719.3"/>
    <property type="gene ID" value="ENSG00000142875.21"/>
</dbReference>
<dbReference type="Ensembl" id="ENST00000370688.7">
    <molecule id="P22694-8"/>
    <property type="protein sequence ID" value="ENSP00000359722.3"/>
    <property type="gene ID" value="ENSG00000142875.21"/>
</dbReference>
<dbReference type="Ensembl" id="ENST00000370689.6">
    <molecule id="P22694-1"/>
    <property type="protein sequence ID" value="ENSP00000359723.2"/>
    <property type="gene ID" value="ENSG00000142875.21"/>
</dbReference>
<dbReference type="Ensembl" id="ENST00000394839.6">
    <molecule id="P22694-10"/>
    <property type="protein sequence ID" value="ENSP00000378315.2"/>
    <property type="gene ID" value="ENSG00000142875.21"/>
</dbReference>
<dbReference type="Ensembl" id="ENST00000436133.6">
    <molecule id="P22694-7"/>
    <property type="protein sequence ID" value="ENSP00000390906.2"/>
    <property type="gene ID" value="ENSG00000142875.21"/>
</dbReference>
<dbReference type="Ensembl" id="ENST00000446538.5">
    <molecule id="P22694-9"/>
    <property type="protein sequence ID" value="ENSP00000401252.2"/>
    <property type="gene ID" value="ENSG00000142875.21"/>
</dbReference>
<dbReference type="Ensembl" id="ENST00000610703.4">
    <molecule id="P22694-3"/>
    <property type="protein sequence ID" value="ENSP00000481980.1"/>
    <property type="gene ID" value="ENSG00000142875.21"/>
</dbReference>
<dbReference type="Ensembl" id="ENST00000614872.4">
    <molecule id="P22694-6"/>
    <property type="protein sequence ID" value="ENSP00000479722.1"/>
    <property type="gene ID" value="ENSG00000142875.21"/>
</dbReference>
<dbReference type="GeneID" id="5567"/>
<dbReference type="KEGG" id="hsa:5567"/>
<dbReference type="MANE-Select" id="ENST00000370685.7">
    <molecule id="P22694-2"/>
    <property type="protein sequence ID" value="ENSP00000359719.3"/>
    <property type="RefSeq nucleotide sequence ID" value="NM_182948.4"/>
    <property type="RefSeq protein sequence ID" value="NP_891993.1"/>
</dbReference>
<dbReference type="UCSC" id="uc001dji.4">
    <molecule id="P22694-1"/>
    <property type="organism name" value="human"/>
</dbReference>
<dbReference type="AGR" id="HGNC:9381"/>
<dbReference type="CTD" id="5567"/>
<dbReference type="DisGeNET" id="5567"/>
<dbReference type="GeneCards" id="PRKACB"/>
<dbReference type="GeneReviews" id="PRKACB"/>
<dbReference type="HGNC" id="HGNC:9381">
    <property type="gene designation" value="PRKACB"/>
</dbReference>
<dbReference type="HPA" id="ENSG00000142875">
    <property type="expression patterns" value="Tissue enhanced (brain)"/>
</dbReference>
<dbReference type="MalaCards" id="PRKACB"/>
<dbReference type="MIM" id="176892">
    <property type="type" value="gene"/>
</dbReference>
<dbReference type="MIM" id="619143">
    <property type="type" value="phenotype"/>
</dbReference>
<dbReference type="neXtProt" id="NX_P22694"/>
<dbReference type="OpenTargets" id="ENSG00000142875"/>
<dbReference type="Orphanet" id="289">
    <property type="disease" value="Ellis Van Creveld syndrome"/>
</dbReference>
<dbReference type="PharmGKB" id="PA33749"/>
<dbReference type="VEuPathDB" id="HostDB:ENSG00000142875"/>
<dbReference type="eggNOG" id="KOG0616">
    <property type="taxonomic scope" value="Eukaryota"/>
</dbReference>
<dbReference type="GeneTree" id="ENSGT00940000161169"/>
<dbReference type="HOGENOM" id="CLU_000288_63_5_1"/>
<dbReference type="InParanoid" id="P22694"/>
<dbReference type="OMA" id="KHTVVKL"/>
<dbReference type="OrthoDB" id="2156623at2759"/>
<dbReference type="PAN-GO" id="P22694">
    <property type="GO annotations" value="2 GO annotations based on evolutionary models"/>
</dbReference>
<dbReference type="PhylomeDB" id="P22694"/>
<dbReference type="TreeFam" id="TF313399"/>
<dbReference type="BRENDA" id="2.7.11.11">
    <property type="organism ID" value="2681"/>
</dbReference>
<dbReference type="PathwayCommons" id="P22694"/>
<dbReference type="Reactome" id="R-HSA-111931">
    <property type="pathway name" value="PKA-mediated phosphorylation of CREB"/>
</dbReference>
<dbReference type="Reactome" id="R-HSA-163358">
    <property type="pathway name" value="PKA-mediated phosphorylation of key metabolic factors"/>
</dbReference>
<dbReference type="Reactome" id="R-HSA-163560">
    <property type="pathway name" value="Triglyceride catabolism"/>
</dbReference>
<dbReference type="Reactome" id="R-HSA-163615">
    <property type="pathway name" value="PKA activation"/>
</dbReference>
<dbReference type="Reactome" id="R-HSA-164378">
    <property type="pathway name" value="PKA activation in glucagon signalling"/>
</dbReference>
<dbReference type="Reactome" id="R-HSA-180024">
    <property type="pathway name" value="DARPP-32 events"/>
</dbReference>
<dbReference type="Reactome" id="R-HSA-381676">
    <property type="pathway name" value="Glucagon-like Peptide-1 (GLP1) regulates insulin secretion"/>
</dbReference>
<dbReference type="Reactome" id="R-HSA-392517">
    <property type="pathway name" value="Rap1 signalling"/>
</dbReference>
<dbReference type="Reactome" id="R-HSA-422356">
    <property type="pathway name" value="Regulation of insulin secretion"/>
</dbReference>
<dbReference type="Reactome" id="R-HSA-432040">
    <property type="pathway name" value="Vasopressin regulates renal water homeostasis via Aquaporins"/>
</dbReference>
<dbReference type="Reactome" id="R-HSA-4420097">
    <property type="pathway name" value="VEGFA-VEGFR2 Pathway"/>
</dbReference>
<dbReference type="Reactome" id="R-HSA-442720">
    <property type="pathway name" value="CREB1 phosphorylation through the activation of Adenylate Cyclase"/>
</dbReference>
<dbReference type="Reactome" id="R-HSA-5610780">
    <property type="pathway name" value="Degradation of GLI1 by the proteasome"/>
</dbReference>
<dbReference type="Reactome" id="R-HSA-5610783">
    <property type="pathway name" value="Degradation of GLI2 by the proteasome"/>
</dbReference>
<dbReference type="Reactome" id="R-HSA-5610785">
    <property type="pathway name" value="GLI3 is processed to GLI3R by the proteasome"/>
</dbReference>
<dbReference type="Reactome" id="R-HSA-5610787">
    <property type="pathway name" value="Hedgehog 'off' state"/>
</dbReference>
<dbReference type="Reactome" id="R-HSA-5621575">
    <property type="pathway name" value="CD209 (DC-SIGN) signaling"/>
</dbReference>
<dbReference type="Reactome" id="R-HSA-5687128">
    <property type="pathway name" value="MAPK6/MAPK4 signaling"/>
</dbReference>
<dbReference type="Reactome" id="R-HSA-8853659">
    <property type="pathway name" value="RET signaling"/>
</dbReference>
<dbReference type="Reactome" id="R-HSA-8963896">
    <property type="pathway name" value="HDL assembly"/>
</dbReference>
<dbReference type="Reactome" id="R-HSA-9010642">
    <property type="pathway name" value="ROBO receptors bind AKAP5"/>
</dbReference>
<dbReference type="Reactome" id="R-HSA-9634597">
    <property type="pathway name" value="GPER1 signaling"/>
</dbReference>
<dbReference type="Reactome" id="R-HSA-9634600">
    <property type="pathway name" value="Regulation of glycolysis by fructose 2,6-bisphosphate metabolism"/>
</dbReference>
<dbReference type="Reactome" id="R-HSA-9660821">
    <property type="pathway name" value="ADORA2B mediated anti-inflammatory cytokines production"/>
</dbReference>
<dbReference type="Reactome" id="R-HSA-9664323">
    <property type="pathway name" value="FCGR3A-mediated IL10 synthesis"/>
</dbReference>
<dbReference type="Reactome" id="R-HSA-983231">
    <property type="pathway name" value="Factors involved in megakaryocyte development and platelet production"/>
</dbReference>
<dbReference type="Reactome" id="R-HSA-9856530">
    <property type="pathway name" value="High laminar flow shear stress activates signaling by PIEZO1 and PECAM1:CDH5:KDR in endothelial cells"/>
</dbReference>
<dbReference type="SABIO-RK" id="P22694"/>
<dbReference type="SignaLink" id="P22694"/>
<dbReference type="SIGNOR" id="P22694"/>
<dbReference type="BioGRID-ORCS" id="5567">
    <property type="hits" value="20 hits in 1191 CRISPR screens"/>
</dbReference>
<dbReference type="CD-CODE" id="FB4E32DD">
    <property type="entry name" value="Presynaptic clusters and postsynaptic densities"/>
</dbReference>
<dbReference type="ChiTaRS" id="PRKACB">
    <property type="organism name" value="human"/>
</dbReference>
<dbReference type="GeneWiki" id="PRKACB"/>
<dbReference type="GenomeRNAi" id="5567"/>
<dbReference type="Pharos" id="P22694">
    <property type="development level" value="Tchem"/>
</dbReference>
<dbReference type="PRO" id="PR:P22694"/>
<dbReference type="Proteomes" id="UP000005640">
    <property type="component" value="Chromosome 1"/>
</dbReference>
<dbReference type="RNAct" id="P22694">
    <property type="molecule type" value="protein"/>
</dbReference>
<dbReference type="Bgee" id="ENSG00000142875">
    <property type="expression patterns" value="Expressed in endothelial cell and 213 other cell types or tissues"/>
</dbReference>
<dbReference type="ExpressionAtlas" id="P22694">
    <property type="expression patterns" value="baseline and differential"/>
</dbReference>
<dbReference type="GO" id="GO:0005952">
    <property type="term" value="C:cAMP-dependent protein kinase complex"/>
    <property type="evidence" value="ECO:0000318"/>
    <property type="project" value="GO_Central"/>
</dbReference>
<dbReference type="GO" id="GO:0005813">
    <property type="term" value="C:centrosome"/>
    <property type="evidence" value="ECO:0000314"/>
    <property type="project" value="UniProtKB"/>
</dbReference>
<dbReference type="GO" id="GO:0097546">
    <property type="term" value="C:ciliary base"/>
    <property type="evidence" value="ECO:0000304"/>
    <property type="project" value="Reactome"/>
</dbReference>
<dbReference type="GO" id="GO:0005829">
    <property type="term" value="C:cytosol"/>
    <property type="evidence" value="ECO:0000318"/>
    <property type="project" value="GO_Central"/>
</dbReference>
<dbReference type="GO" id="GO:0070062">
    <property type="term" value="C:extracellular exosome"/>
    <property type="evidence" value="ECO:0007005"/>
    <property type="project" value="UniProtKB"/>
</dbReference>
<dbReference type="GO" id="GO:0005654">
    <property type="term" value="C:nucleoplasm"/>
    <property type="evidence" value="ECO:0000304"/>
    <property type="project" value="Reactome"/>
</dbReference>
<dbReference type="GO" id="GO:0005634">
    <property type="term" value="C:nucleus"/>
    <property type="evidence" value="ECO:0000318"/>
    <property type="project" value="GO_Central"/>
</dbReference>
<dbReference type="GO" id="GO:0005886">
    <property type="term" value="C:plasma membrane"/>
    <property type="evidence" value="ECO:0007669"/>
    <property type="project" value="UniProtKB-SubCell"/>
</dbReference>
<dbReference type="GO" id="GO:0005524">
    <property type="term" value="F:ATP binding"/>
    <property type="evidence" value="ECO:0000314"/>
    <property type="project" value="UniProtKB"/>
</dbReference>
<dbReference type="GO" id="GO:0004691">
    <property type="term" value="F:cAMP-dependent protein kinase activity"/>
    <property type="evidence" value="ECO:0000314"/>
    <property type="project" value="UniProtKB"/>
</dbReference>
<dbReference type="GO" id="GO:0000287">
    <property type="term" value="F:magnesium ion binding"/>
    <property type="evidence" value="ECO:0000314"/>
    <property type="project" value="UniProtKB"/>
</dbReference>
<dbReference type="GO" id="GO:0106310">
    <property type="term" value="F:protein serine kinase activity"/>
    <property type="evidence" value="ECO:0007669"/>
    <property type="project" value="RHEA"/>
</dbReference>
<dbReference type="GO" id="GO:0004674">
    <property type="term" value="F:protein serine/threonine kinase activity"/>
    <property type="evidence" value="ECO:0000304"/>
    <property type="project" value="Reactome"/>
</dbReference>
<dbReference type="GO" id="GO:0031625">
    <property type="term" value="F:ubiquitin protein ligase binding"/>
    <property type="evidence" value="ECO:0000314"/>
    <property type="project" value="UniProtKB"/>
</dbReference>
<dbReference type="GO" id="GO:0007188">
    <property type="term" value="P:adenylate cyclase-modulating G protein-coupled receptor signaling pathway"/>
    <property type="evidence" value="ECO:0000304"/>
    <property type="project" value="UniProtKB"/>
</dbReference>
<dbReference type="GO" id="GO:0034380">
    <property type="term" value="P:high-density lipoprotein particle assembly"/>
    <property type="evidence" value="ECO:0000304"/>
    <property type="project" value="Reactome"/>
</dbReference>
<dbReference type="GO" id="GO:0045879">
    <property type="term" value="P:negative regulation of smoothened signaling pathway"/>
    <property type="evidence" value="ECO:0007669"/>
    <property type="project" value="Ensembl"/>
</dbReference>
<dbReference type="GO" id="GO:1904262">
    <property type="term" value="P:negative regulation of TORC1 signaling"/>
    <property type="evidence" value="ECO:0000314"/>
    <property type="project" value="UniProtKB"/>
</dbReference>
<dbReference type="GO" id="GO:0001843">
    <property type="term" value="P:neural tube closure"/>
    <property type="evidence" value="ECO:0007669"/>
    <property type="project" value="Ensembl"/>
</dbReference>
<dbReference type="GO" id="GO:0006468">
    <property type="term" value="P:protein phosphorylation"/>
    <property type="evidence" value="ECO:0000314"/>
    <property type="project" value="UniProtKB"/>
</dbReference>
<dbReference type="GO" id="GO:0070613">
    <property type="term" value="P:regulation of protein processing"/>
    <property type="evidence" value="ECO:0007669"/>
    <property type="project" value="Ensembl"/>
</dbReference>
<dbReference type="GO" id="GO:0003091">
    <property type="term" value="P:renal water homeostasis"/>
    <property type="evidence" value="ECO:0000304"/>
    <property type="project" value="Reactome"/>
</dbReference>
<dbReference type="GO" id="GO:0007165">
    <property type="term" value="P:signal transduction"/>
    <property type="evidence" value="ECO:0000318"/>
    <property type="project" value="GO_Central"/>
</dbReference>
<dbReference type="GO" id="GO:0097700">
    <property type="term" value="P:vascular endothelial cell response to laminar fluid shear stress"/>
    <property type="evidence" value="ECO:0000304"/>
    <property type="project" value="Reactome"/>
</dbReference>
<dbReference type="CDD" id="cd14209">
    <property type="entry name" value="STKc_PKA"/>
    <property type="match status" value="1"/>
</dbReference>
<dbReference type="FunFam" id="3.30.200.20:FF:000005">
    <property type="entry name" value="cAMP-dependent protein kinase catalytic subunit"/>
    <property type="match status" value="1"/>
</dbReference>
<dbReference type="FunFam" id="1.10.510.10:FF:000005">
    <property type="entry name" value="cAMP-dependent protein kinase catalytic subunit alpha"/>
    <property type="match status" value="1"/>
</dbReference>
<dbReference type="Gene3D" id="3.30.200.20">
    <property type="entry name" value="Phosphorylase Kinase, domain 1"/>
    <property type="match status" value="1"/>
</dbReference>
<dbReference type="Gene3D" id="1.10.510.10">
    <property type="entry name" value="Transferase(Phosphotransferase) domain 1"/>
    <property type="match status" value="1"/>
</dbReference>
<dbReference type="InterPro" id="IPR000961">
    <property type="entry name" value="AGC-kinase_C"/>
</dbReference>
<dbReference type="InterPro" id="IPR011009">
    <property type="entry name" value="Kinase-like_dom_sf"/>
</dbReference>
<dbReference type="InterPro" id="IPR000719">
    <property type="entry name" value="Prot_kinase_dom"/>
</dbReference>
<dbReference type="InterPro" id="IPR017441">
    <property type="entry name" value="Protein_kinase_ATP_BS"/>
</dbReference>
<dbReference type="InterPro" id="IPR008271">
    <property type="entry name" value="Ser/Thr_kinase_AS"/>
</dbReference>
<dbReference type="InterPro" id="IPR044109">
    <property type="entry name" value="STKc_PKA"/>
</dbReference>
<dbReference type="PANTHER" id="PTHR24353:SF116">
    <property type="entry name" value="CAMP-DEPENDENT PROTEIN KINASE"/>
    <property type="match status" value="1"/>
</dbReference>
<dbReference type="PANTHER" id="PTHR24353">
    <property type="entry name" value="CYCLIC NUCLEOTIDE-DEPENDENT PROTEIN KINASE"/>
    <property type="match status" value="1"/>
</dbReference>
<dbReference type="Pfam" id="PF00069">
    <property type="entry name" value="Pkinase"/>
    <property type="match status" value="1"/>
</dbReference>
<dbReference type="SMART" id="SM00133">
    <property type="entry name" value="S_TK_X"/>
    <property type="match status" value="1"/>
</dbReference>
<dbReference type="SMART" id="SM00220">
    <property type="entry name" value="S_TKc"/>
    <property type="match status" value="1"/>
</dbReference>
<dbReference type="SUPFAM" id="SSF56112">
    <property type="entry name" value="Protein kinase-like (PK-like)"/>
    <property type="match status" value="1"/>
</dbReference>
<dbReference type="PROSITE" id="PS51285">
    <property type="entry name" value="AGC_KINASE_CTER"/>
    <property type="match status" value="1"/>
</dbReference>
<dbReference type="PROSITE" id="PS00107">
    <property type="entry name" value="PROTEIN_KINASE_ATP"/>
    <property type="match status" value="1"/>
</dbReference>
<dbReference type="PROSITE" id="PS50011">
    <property type="entry name" value="PROTEIN_KINASE_DOM"/>
    <property type="match status" value="1"/>
</dbReference>
<dbReference type="PROSITE" id="PS00108">
    <property type="entry name" value="PROTEIN_KINASE_ST"/>
    <property type="match status" value="1"/>
</dbReference>
<sequence length="351" mass="40623">MGNAATAKKGSEVESVKEFLAKAKEDFLKKWENPTQNNAGLEDFERKKTLGTGSFGRVMLVKHKATEQYYAMKILDKQKVVKLKQIEHTLNEKRILQAVNFPFLVRLEYAFKDNSNLYMVMEYVPGGEMFSHLRRIGRFSEPHARFYAAQIVLTFEYLHSLDLIYRDLKPENLLIDHQGYIQVTDFGFAKRVKGRTWTLCGTPEYLAPEIILSKGYNKAVDWWALGVLIYEMAAGYPPFFADQPIQIYEKIVSGKVRFPSHFSSDLKDLLRNLLQVDLTKRFGNLKNGVSDIKTHKWFATTDWIAIYQRKVEAPFIPKFRGSGDTSNFDDYEEEDIRVSITEKCAKEFGEF</sequence>
<comment type="function">
    <text evidence="10 12 13 15">Mediates cAMP-dependent signaling triggered by receptor binding to GPCRs (PubMed:12420224, PubMed:21423175, PubMed:31112131). PKA activation regulates diverse cellular processes such as cell proliferation, the cell cycle, differentiation and regulation of microtubule dynamics, chromatin condensation and decondensation, nuclear envelope disassembly and reassembly, as well as regulation of intracellular transport mechanisms and ion flux (PubMed:12420224, PubMed:21423175). Regulates the abundance of compartmentalized pools of its regulatory subunits through phosphorylation of PJA2 which binds and ubiquitinates these subunits, leading to their subsequent proteolysis (PubMed:12420224, PubMed:21423175). Phosphorylates GPKOW which regulates its ability to bind RNA (PubMed:21880142). Acts as a negative regulator of mTORC1 by mediating phosphorylation of RPTOR (PubMed:31112131).</text>
</comment>
<comment type="catalytic activity">
    <reaction evidence="10">
        <text>L-seryl-[protein] + ATP = O-phospho-L-seryl-[protein] + ADP + H(+)</text>
        <dbReference type="Rhea" id="RHEA:17989"/>
        <dbReference type="Rhea" id="RHEA-COMP:9863"/>
        <dbReference type="Rhea" id="RHEA-COMP:11604"/>
        <dbReference type="ChEBI" id="CHEBI:15378"/>
        <dbReference type="ChEBI" id="CHEBI:29999"/>
        <dbReference type="ChEBI" id="CHEBI:30616"/>
        <dbReference type="ChEBI" id="CHEBI:83421"/>
        <dbReference type="ChEBI" id="CHEBI:456216"/>
        <dbReference type="EC" id="2.7.11.11"/>
    </reaction>
</comment>
<comment type="catalytic activity">
    <reaction evidence="10">
        <text>L-threonyl-[protein] + ATP = O-phospho-L-threonyl-[protein] + ADP + H(+)</text>
        <dbReference type="Rhea" id="RHEA:46608"/>
        <dbReference type="Rhea" id="RHEA-COMP:11060"/>
        <dbReference type="Rhea" id="RHEA-COMP:11605"/>
        <dbReference type="ChEBI" id="CHEBI:15378"/>
        <dbReference type="ChEBI" id="CHEBI:30013"/>
        <dbReference type="ChEBI" id="CHEBI:30616"/>
        <dbReference type="ChEBI" id="CHEBI:61977"/>
        <dbReference type="ChEBI" id="CHEBI:456216"/>
        <dbReference type="EC" id="2.7.11.11"/>
    </reaction>
</comment>
<comment type="cofactor">
    <cofactor evidence="10">
        <name>Mg(2+)</name>
        <dbReference type="ChEBI" id="CHEBI:18420"/>
    </cofactor>
</comment>
<comment type="activity regulation">
    <text evidence="16">Activated by cAMP.</text>
</comment>
<comment type="subunit">
    <text evidence="2 12 13 16">A number of inactive tetrameric holoenzymes are produced by the combination of homo- or heterodimers of the different regulatory subunits associated with two catalytic subunits. cAMP causes the dissociation of the inactive holoenzyme into a dimer of regulatory subunits bound to four cAMP and two free monomeric catalytic subunits (By similarity). Interacts with PRKAR1A and PRKAR2B (PubMed:33058759). The cAMP-dependent protein kinase catalytic subunit binds PJA2 (PubMed:21423175). Interacts with GPKOW (PubMed:21880142).</text>
</comment>
<comment type="interaction">
    <interactant intactId="EBI-2679622">
        <id>P22694</id>
    </interactant>
    <interactant intactId="EBI-77613">
        <id>P05067</id>
        <label>APP</label>
    </interactant>
    <organismsDiffer>false</organismsDiffer>
    <experiments>3</experiments>
</comment>
<comment type="interaction">
    <interactant intactId="EBI-2679622">
        <id>P22694</id>
    </interactant>
    <interactant intactId="EBI-743771">
        <id>Q92624</id>
        <label>APPBP2</label>
    </interactant>
    <organismsDiffer>false</organismsDiffer>
    <experiments>3</experiments>
</comment>
<comment type="interaction">
    <interactant intactId="EBI-2679622">
        <id>P22694</id>
    </interactant>
    <interactant intactId="EBI-8640233">
        <id>Q5T686</id>
        <label>AVPI1</label>
    </interactant>
    <organismsDiffer>false</organismsDiffer>
    <experiments>3</experiments>
</comment>
<comment type="interaction">
    <interactant intactId="EBI-2679622">
        <id>P22694</id>
    </interactant>
    <interactant intactId="EBI-352572">
        <id>P08238</id>
        <label>HSP90AB1</label>
    </interactant>
    <organismsDiffer>false</organismsDiffer>
    <experiments>2</experiments>
</comment>
<comment type="interaction">
    <interactant intactId="EBI-2679622">
        <id>P22694</id>
    </interactant>
    <interactant intactId="EBI-2682139">
        <id>P61925</id>
        <label>PKIA</label>
    </interactant>
    <organismsDiffer>false</organismsDiffer>
    <experiments>5</experiments>
</comment>
<comment type="interaction">
    <interactant intactId="EBI-5258763">
        <id>P22694-2</id>
    </interactant>
    <interactant intactId="EBI-746309">
        <id>Q92917</id>
        <label>GPKOW</label>
    </interactant>
    <organismsDiffer>false</organismsDiffer>
    <experiments>4</experiments>
</comment>
<comment type="interaction">
    <interactant intactId="EBI-25937151">
        <id>P22694-8</id>
    </interactant>
    <interactant intactId="EBI-77613">
        <id>P05067</id>
        <label>APP</label>
    </interactant>
    <organismsDiffer>false</organismsDiffer>
    <experiments>3</experiments>
</comment>
<comment type="subcellular location">
    <subcellularLocation>
        <location evidence="12">Cytoplasm</location>
    </subcellularLocation>
    <subcellularLocation>
        <location evidence="12">Cell membrane</location>
    </subcellularLocation>
    <subcellularLocation>
        <location evidence="22">Membrane</location>
        <topology evidence="22">Lipid-anchor</topology>
    </subcellularLocation>
    <subcellularLocation>
        <location evidence="1">Nucleus</location>
    </subcellularLocation>
    <text evidence="1">Translocates into the nucleus (monomeric catalytic subunit). The inactive holoenzyme is found in the cytoplasm.</text>
</comment>
<comment type="alternative products">
    <event type="alternative splicing"/>
    <isoform>
        <id>P22694-1</id>
        <name>1</name>
        <name>Beta1</name>
        <sequence type="displayed"/>
    </isoform>
    <isoform>
        <id>P22694-2</id>
        <name>2</name>
        <name>Beta2</name>
        <sequence type="described" ref="VSP_017364"/>
    </isoform>
    <isoform>
        <id>P22694-3</id>
        <name>3</name>
        <name>Beta3</name>
        <sequence type="described" ref="VSP_017369 VSP_017370"/>
    </isoform>
    <isoform>
        <id>P22694-4</id>
        <name>4</name>
        <name>Beta4</name>
        <sequence type="described" ref="VSP_017368 VSP_017371"/>
    </isoform>
    <isoform>
        <id>P22694-5</id>
        <name>5</name>
        <name>Beta4ab</name>
        <sequence type="described" ref="VSP_017366"/>
    </isoform>
    <isoform>
        <id>P22694-6</id>
        <name>6</name>
        <name>Beta4abc</name>
        <sequence type="described" ref="VSP_017365"/>
    </isoform>
    <isoform>
        <id>P22694-7</id>
        <name>7</name>
        <sequence type="described" ref="VSP_017367"/>
    </isoform>
    <isoform>
        <id>P22694-8</id>
        <name>8</name>
        <sequence type="described" ref="VSP_036556 VSP_036557"/>
    </isoform>
    <isoform>
        <id>P22694-9</id>
        <name>9</name>
        <sequence type="described" ref="VSP_043372"/>
    </isoform>
    <isoform>
        <id>P22694-10</id>
        <name>10</name>
        <sequence type="described" ref="VSP_017366 VSP_046238"/>
    </isoform>
</comment>
<comment type="tissue specificity">
    <text evidence="9">Isoform 1 is most abundant in the brain, with low level expression in kidney. Isoform 2 is predominantly expressed in thymus, spleen and kidney. Isoform 3 and isoform 4 are only expressed in the brain.</text>
</comment>
<comment type="PTM">
    <text evidence="3">Asn-3 is partially deaminated to Asp giving rise to 2 major isoelectric variants, called CB and CA respectively.</text>
</comment>
<comment type="disease" evidence="16">
    <disease id="DI-05998">
        <name>Cardioacrofacial dysplasia 2</name>
        <acronym>CAFD2</acronym>
        <description>An autosomal dominant disease characterized by dysmorphic facial features, congenital cardiac defects, primarily common atrium or atrioventricular septal defect, and limb anomalies, including short limbs, brachydactyly and postaxial polydactyly. CAFD2 patients may show developmental delay of variable severity, intellectual disability, autistic features and focal seizures.</description>
        <dbReference type="MIM" id="619143"/>
    </disease>
    <text>The disease is caused by variants affecting the gene represented in this entry.</text>
</comment>
<comment type="miscellaneous">
    <molecule>Isoform 3</molecule>
    <text evidence="22">Incomplete sequence.</text>
</comment>
<comment type="miscellaneous">
    <molecule>Isoform 4</molecule>
    <text evidence="22">Incomplete sequence.</text>
</comment>
<comment type="miscellaneous">
    <molecule>Isoform 5</molecule>
    <text evidence="22">Incomplete sequence.</text>
</comment>
<comment type="similarity">
    <text evidence="22">Belongs to the protein kinase superfamily. AGC Ser/Thr protein kinase family. cAMP subfamily.</text>
</comment>
<comment type="sequence caution" evidence="22">
    <conflict type="frameshift">
        <sequence resource="EMBL-CDS" id="BAD92426"/>
    </conflict>
</comment>
<organism>
    <name type="scientific">Homo sapiens</name>
    <name type="common">Human</name>
    <dbReference type="NCBI Taxonomy" id="9606"/>
    <lineage>
        <taxon>Eukaryota</taxon>
        <taxon>Metazoa</taxon>
        <taxon>Chordata</taxon>
        <taxon>Craniata</taxon>
        <taxon>Vertebrata</taxon>
        <taxon>Euteleostomi</taxon>
        <taxon>Mammalia</taxon>
        <taxon>Eutheria</taxon>
        <taxon>Euarchontoglires</taxon>
        <taxon>Primates</taxon>
        <taxon>Haplorrhini</taxon>
        <taxon>Catarrhini</taxon>
        <taxon>Hominidae</taxon>
        <taxon>Homo</taxon>
    </lineage>
</organism>
<evidence type="ECO:0000250" key="1">
    <source>
        <dbReference type="UniProtKB" id="P05131"/>
    </source>
</evidence>
<evidence type="ECO:0000250" key="2">
    <source>
        <dbReference type="UniProtKB" id="P05132"/>
    </source>
</evidence>
<evidence type="ECO:0000250" key="3">
    <source>
        <dbReference type="UniProtKB" id="P05383"/>
    </source>
</evidence>
<evidence type="ECO:0000250" key="4">
    <source>
        <dbReference type="UniProtKB" id="P68181"/>
    </source>
</evidence>
<evidence type="ECO:0000250" key="5">
    <source>
        <dbReference type="UniProtKB" id="P68182"/>
    </source>
</evidence>
<evidence type="ECO:0000255" key="6">
    <source>
        <dbReference type="PROSITE-ProRule" id="PRU00159"/>
    </source>
</evidence>
<evidence type="ECO:0000255" key="7">
    <source>
        <dbReference type="PROSITE-ProRule" id="PRU00618"/>
    </source>
</evidence>
<evidence type="ECO:0000255" key="8">
    <source>
        <dbReference type="PROSITE-ProRule" id="PRU10027"/>
    </source>
</evidence>
<evidence type="ECO:0000269" key="9">
    <source>
    </source>
</evidence>
<evidence type="ECO:0000269" key="10">
    <source>
    </source>
</evidence>
<evidence type="ECO:0000269" key="11">
    <source>
    </source>
</evidence>
<evidence type="ECO:0000269" key="12">
    <source>
    </source>
</evidence>
<evidence type="ECO:0000269" key="13">
    <source>
    </source>
</evidence>
<evidence type="ECO:0000269" key="14">
    <source>
    </source>
</evidence>
<evidence type="ECO:0000269" key="15">
    <source>
    </source>
</evidence>
<evidence type="ECO:0000269" key="16">
    <source>
    </source>
</evidence>
<evidence type="ECO:0000303" key="17">
    <source>
    </source>
</evidence>
<evidence type="ECO:0000303" key="18">
    <source>
    </source>
</evidence>
<evidence type="ECO:0000303" key="19">
    <source>
    </source>
</evidence>
<evidence type="ECO:0000303" key="20">
    <source>
    </source>
</evidence>
<evidence type="ECO:0000303" key="21">
    <source ref="3"/>
</evidence>
<evidence type="ECO:0000305" key="22"/>
<reference key="1">
    <citation type="journal article" date="1990" name="Mol. Endocrinol.">
        <title>Molecular cloning of a tissue-specific protein kinase (C gamma) from human testis -- representing a third isoform for the catalytic subunit of cAMP-dependent protein kinase.</title>
        <authorList>
            <person name="Beebe S.J."/>
            <person name="Oyen O."/>
            <person name="Sandberg M."/>
            <person name="Froysa A."/>
            <person name="Hansson V."/>
            <person name="Jahnsen T."/>
        </authorList>
    </citation>
    <scope>NUCLEOTIDE SEQUENCE [MRNA] (ISOFORM 1)</scope>
    <source>
        <tissue>Testis</tissue>
    </source>
</reference>
<reference key="2">
    <citation type="journal article" date="2007" name="BMC Genomics">
        <title>The full-ORF clone resource of the German cDNA consortium.</title>
        <authorList>
            <person name="Bechtel S."/>
            <person name="Rosenfelder H."/>
            <person name="Duda A."/>
            <person name="Schmidt C.P."/>
            <person name="Ernst U."/>
            <person name="Wellenreuther R."/>
            <person name="Mehrle A."/>
            <person name="Schuster C."/>
            <person name="Bahr A."/>
            <person name="Bloecker H."/>
            <person name="Heubner D."/>
            <person name="Hoerlein A."/>
            <person name="Michel G."/>
            <person name="Wedler H."/>
            <person name="Koehrer K."/>
            <person name="Ottenwaelder B."/>
            <person name="Poustka A."/>
            <person name="Wiemann S."/>
            <person name="Schupp I."/>
        </authorList>
    </citation>
    <scope>NUCLEOTIDE SEQUENCE [LARGE SCALE MRNA] (ISOFORMS 2 AND 7)</scope>
    <source>
        <tissue>Retina</tissue>
        <tissue>Salivary gland</tissue>
    </source>
</reference>
<reference key="3">
    <citation type="submission" date="2005-03" db="EMBL/GenBank/DDBJ databases">
        <authorList>
            <person name="Totoki Y."/>
            <person name="Toyoda A."/>
            <person name="Takeda T."/>
            <person name="Sakaki Y."/>
            <person name="Tanaka A."/>
            <person name="Yokoyama S."/>
            <person name="Ohara O."/>
            <person name="Nagase T."/>
            <person name="Kikuno R.F."/>
        </authorList>
    </citation>
    <scope>NUCLEOTIDE SEQUENCE [LARGE SCALE MRNA] (ISOFORM 6)</scope>
    <source>
        <tissue>Brain</tissue>
    </source>
</reference>
<reference key="4">
    <citation type="journal article" date="2004" name="Nat. Genet.">
        <title>Complete sequencing and characterization of 21,243 full-length human cDNAs.</title>
        <authorList>
            <person name="Ota T."/>
            <person name="Suzuki Y."/>
            <person name="Nishikawa T."/>
            <person name="Otsuki T."/>
            <person name="Sugiyama T."/>
            <person name="Irie R."/>
            <person name="Wakamatsu A."/>
            <person name="Hayashi K."/>
            <person name="Sato H."/>
            <person name="Nagai K."/>
            <person name="Kimura K."/>
            <person name="Makita H."/>
            <person name="Sekine M."/>
            <person name="Obayashi M."/>
            <person name="Nishi T."/>
            <person name="Shibahara T."/>
            <person name="Tanaka T."/>
            <person name="Ishii S."/>
            <person name="Yamamoto J."/>
            <person name="Saito K."/>
            <person name="Kawai Y."/>
            <person name="Isono Y."/>
            <person name="Nakamura Y."/>
            <person name="Nagahari K."/>
            <person name="Murakami K."/>
            <person name="Yasuda T."/>
            <person name="Iwayanagi T."/>
            <person name="Wagatsuma M."/>
            <person name="Shiratori A."/>
            <person name="Sudo H."/>
            <person name="Hosoiri T."/>
            <person name="Kaku Y."/>
            <person name="Kodaira H."/>
            <person name="Kondo H."/>
            <person name="Sugawara M."/>
            <person name="Takahashi M."/>
            <person name="Kanda K."/>
            <person name="Yokoi T."/>
            <person name="Furuya T."/>
            <person name="Kikkawa E."/>
            <person name="Omura Y."/>
            <person name="Abe K."/>
            <person name="Kamihara K."/>
            <person name="Katsuta N."/>
            <person name="Sato K."/>
            <person name="Tanikawa M."/>
            <person name="Yamazaki M."/>
            <person name="Ninomiya K."/>
            <person name="Ishibashi T."/>
            <person name="Yamashita H."/>
            <person name="Murakawa K."/>
            <person name="Fujimori K."/>
            <person name="Tanai H."/>
            <person name="Kimata M."/>
            <person name="Watanabe M."/>
            <person name="Hiraoka S."/>
            <person name="Chiba Y."/>
            <person name="Ishida S."/>
            <person name="Ono Y."/>
            <person name="Takiguchi S."/>
            <person name="Watanabe S."/>
            <person name="Yosida M."/>
            <person name="Hotuta T."/>
            <person name="Kusano J."/>
            <person name="Kanehori K."/>
            <person name="Takahashi-Fujii A."/>
            <person name="Hara H."/>
            <person name="Tanase T.-O."/>
            <person name="Nomura Y."/>
            <person name="Togiya S."/>
            <person name="Komai F."/>
            <person name="Hara R."/>
            <person name="Takeuchi K."/>
            <person name="Arita M."/>
            <person name="Imose N."/>
            <person name="Musashino K."/>
            <person name="Yuuki H."/>
            <person name="Oshima A."/>
            <person name="Sasaki N."/>
            <person name="Aotsuka S."/>
            <person name="Yoshikawa Y."/>
            <person name="Matsunawa H."/>
            <person name="Ichihara T."/>
            <person name="Shiohata N."/>
            <person name="Sano S."/>
            <person name="Moriya S."/>
            <person name="Momiyama H."/>
            <person name="Satoh N."/>
            <person name="Takami S."/>
            <person name="Terashima Y."/>
            <person name="Suzuki O."/>
            <person name="Nakagawa S."/>
            <person name="Senoh A."/>
            <person name="Mizoguchi H."/>
            <person name="Goto Y."/>
            <person name="Shimizu F."/>
            <person name="Wakebe H."/>
            <person name="Hishigaki H."/>
            <person name="Watanabe T."/>
            <person name="Sugiyama A."/>
            <person name="Takemoto M."/>
            <person name="Kawakami B."/>
            <person name="Yamazaki M."/>
            <person name="Watanabe K."/>
            <person name="Kumagai A."/>
            <person name="Itakura S."/>
            <person name="Fukuzumi Y."/>
            <person name="Fujimori Y."/>
            <person name="Komiyama M."/>
            <person name="Tashiro H."/>
            <person name="Tanigami A."/>
            <person name="Fujiwara T."/>
            <person name="Ono T."/>
            <person name="Yamada K."/>
            <person name="Fujii Y."/>
            <person name="Ozaki K."/>
            <person name="Hirao M."/>
            <person name="Ohmori Y."/>
            <person name="Kawabata A."/>
            <person name="Hikiji T."/>
            <person name="Kobatake N."/>
            <person name="Inagaki H."/>
            <person name="Ikema Y."/>
            <person name="Okamoto S."/>
            <person name="Okitani R."/>
            <person name="Kawakami T."/>
            <person name="Noguchi S."/>
            <person name="Itoh T."/>
            <person name="Shigeta K."/>
            <person name="Senba T."/>
            <person name="Matsumura K."/>
            <person name="Nakajima Y."/>
            <person name="Mizuno T."/>
            <person name="Morinaga M."/>
            <person name="Sasaki M."/>
            <person name="Togashi T."/>
            <person name="Oyama M."/>
            <person name="Hata H."/>
            <person name="Watanabe M."/>
            <person name="Komatsu T."/>
            <person name="Mizushima-Sugano J."/>
            <person name="Satoh T."/>
            <person name="Shirai Y."/>
            <person name="Takahashi Y."/>
            <person name="Nakagawa K."/>
            <person name="Okumura K."/>
            <person name="Nagase T."/>
            <person name="Nomura N."/>
            <person name="Kikuchi H."/>
            <person name="Masuho Y."/>
            <person name="Yamashita R."/>
            <person name="Nakai K."/>
            <person name="Yada T."/>
            <person name="Nakamura Y."/>
            <person name="Ohara O."/>
            <person name="Isogai T."/>
            <person name="Sugano S."/>
        </authorList>
    </citation>
    <scope>NUCLEOTIDE SEQUENCE [LARGE SCALE MRNA] (ISOFORMS 3; 9 AND 10)</scope>
    <source>
        <tissue>Brain</tissue>
        <tissue>Thalamus</tissue>
        <tissue>Trachea</tissue>
    </source>
</reference>
<reference key="5">
    <citation type="submission" date="2006-06" db="EMBL/GenBank/DDBJ databases">
        <authorList>
            <consortium name="SeattleSNPs variation discovery resource"/>
        </authorList>
    </citation>
    <scope>NUCLEOTIDE SEQUENCE [GENOMIC DNA]</scope>
</reference>
<reference key="6">
    <citation type="journal article" date="2006" name="Nature">
        <title>The DNA sequence and biological annotation of human chromosome 1.</title>
        <authorList>
            <person name="Gregory S.G."/>
            <person name="Barlow K.F."/>
            <person name="McLay K.E."/>
            <person name="Kaul R."/>
            <person name="Swarbreck D."/>
            <person name="Dunham A."/>
            <person name="Scott C.E."/>
            <person name="Howe K.L."/>
            <person name="Woodfine K."/>
            <person name="Spencer C.C.A."/>
            <person name="Jones M.C."/>
            <person name="Gillson C."/>
            <person name="Searle S."/>
            <person name="Zhou Y."/>
            <person name="Kokocinski F."/>
            <person name="McDonald L."/>
            <person name="Evans R."/>
            <person name="Phillips K."/>
            <person name="Atkinson A."/>
            <person name="Cooper R."/>
            <person name="Jones C."/>
            <person name="Hall R.E."/>
            <person name="Andrews T.D."/>
            <person name="Lloyd C."/>
            <person name="Ainscough R."/>
            <person name="Almeida J.P."/>
            <person name="Ambrose K.D."/>
            <person name="Anderson F."/>
            <person name="Andrew R.W."/>
            <person name="Ashwell R.I.S."/>
            <person name="Aubin K."/>
            <person name="Babbage A.K."/>
            <person name="Bagguley C.L."/>
            <person name="Bailey J."/>
            <person name="Beasley H."/>
            <person name="Bethel G."/>
            <person name="Bird C.P."/>
            <person name="Bray-Allen S."/>
            <person name="Brown J.Y."/>
            <person name="Brown A.J."/>
            <person name="Buckley D."/>
            <person name="Burton J."/>
            <person name="Bye J."/>
            <person name="Carder C."/>
            <person name="Chapman J.C."/>
            <person name="Clark S.Y."/>
            <person name="Clarke G."/>
            <person name="Clee C."/>
            <person name="Cobley V."/>
            <person name="Collier R.E."/>
            <person name="Corby N."/>
            <person name="Coville G.J."/>
            <person name="Davies J."/>
            <person name="Deadman R."/>
            <person name="Dunn M."/>
            <person name="Earthrowl M."/>
            <person name="Ellington A.G."/>
            <person name="Errington H."/>
            <person name="Frankish A."/>
            <person name="Frankland J."/>
            <person name="French L."/>
            <person name="Garner P."/>
            <person name="Garnett J."/>
            <person name="Gay L."/>
            <person name="Ghori M.R.J."/>
            <person name="Gibson R."/>
            <person name="Gilby L.M."/>
            <person name="Gillett W."/>
            <person name="Glithero R.J."/>
            <person name="Grafham D.V."/>
            <person name="Griffiths C."/>
            <person name="Griffiths-Jones S."/>
            <person name="Grocock R."/>
            <person name="Hammond S."/>
            <person name="Harrison E.S.I."/>
            <person name="Hart E."/>
            <person name="Haugen E."/>
            <person name="Heath P.D."/>
            <person name="Holmes S."/>
            <person name="Holt K."/>
            <person name="Howden P.J."/>
            <person name="Hunt A.R."/>
            <person name="Hunt S.E."/>
            <person name="Hunter G."/>
            <person name="Isherwood J."/>
            <person name="James R."/>
            <person name="Johnson C."/>
            <person name="Johnson D."/>
            <person name="Joy A."/>
            <person name="Kay M."/>
            <person name="Kershaw J.K."/>
            <person name="Kibukawa M."/>
            <person name="Kimberley A.M."/>
            <person name="King A."/>
            <person name="Knights A.J."/>
            <person name="Lad H."/>
            <person name="Laird G."/>
            <person name="Lawlor S."/>
            <person name="Leongamornlert D.A."/>
            <person name="Lloyd D.M."/>
            <person name="Loveland J."/>
            <person name="Lovell J."/>
            <person name="Lush M.J."/>
            <person name="Lyne R."/>
            <person name="Martin S."/>
            <person name="Mashreghi-Mohammadi M."/>
            <person name="Matthews L."/>
            <person name="Matthews N.S.W."/>
            <person name="McLaren S."/>
            <person name="Milne S."/>
            <person name="Mistry S."/>
            <person name="Moore M.J.F."/>
            <person name="Nickerson T."/>
            <person name="O'Dell C.N."/>
            <person name="Oliver K."/>
            <person name="Palmeiri A."/>
            <person name="Palmer S.A."/>
            <person name="Parker A."/>
            <person name="Patel D."/>
            <person name="Pearce A.V."/>
            <person name="Peck A.I."/>
            <person name="Pelan S."/>
            <person name="Phelps K."/>
            <person name="Phillimore B.J."/>
            <person name="Plumb R."/>
            <person name="Rajan J."/>
            <person name="Raymond C."/>
            <person name="Rouse G."/>
            <person name="Saenphimmachak C."/>
            <person name="Sehra H.K."/>
            <person name="Sheridan E."/>
            <person name="Shownkeen R."/>
            <person name="Sims S."/>
            <person name="Skuce C.D."/>
            <person name="Smith M."/>
            <person name="Steward C."/>
            <person name="Subramanian S."/>
            <person name="Sycamore N."/>
            <person name="Tracey A."/>
            <person name="Tromans A."/>
            <person name="Van Helmond Z."/>
            <person name="Wall M."/>
            <person name="Wallis J.M."/>
            <person name="White S."/>
            <person name="Whitehead S.L."/>
            <person name="Wilkinson J.E."/>
            <person name="Willey D.L."/>
            <person name="Williams H."/>
            <person name="Wilming L."/>
            <person name="Wray P.W."/>
            <person name="Wu Z."/>
            <person name="Coulson A."/>
            <person name="Vaudin M."/>
            <person name="Sulston J.E."/>
            <person name="Durbin R.M."/>
            <person name="Hubbard T."/>
            <person name="Wooster R."/>
            <person name="Dunham I."/>
            <person name="Carter N.P."/>
            <person name="McVean G."/>
            <person name="Ross M.T."/>
            <person name="Harrow J."/>
            <person name="Olson M.V."/>
            <person name="Beck S."/>
            <person name="Rogers J."/>
            <person name="Bentley D.R."/>
        </authorList>
    </citation>
    <scope>NUCLEOTIDE SEQUENCE [LARGE SCALE GENOMIC DNA]</scope>
</reference>
<reference key="7">
    <citation type="submission" date="2005-09" db="EMBL/GenBank/DDBJ databases">
        <authorList>
            <person name="Mural R.J."/>
            <person name="Istrail S."/>
            <person name="Sutton G.G."/>
            <person name="Florea L."/>
            <person name="Halpern A.L."/>
            <person name="Mobarry C.M."/>
            <person name="Lippert R."/>
            <person name="Walenz B."/>
            <person name="Shatkay H."/>
            <person name="Dew I."/>
            <person name="Miller J.R."/>
            <person name="Flanigan M.J."/>
            <person name="Edwards N.J."/>
            <person name="Bolanos R."/>
            <person name="Fasulo D."/>
            <person name="Halldorsson B.V."/>
            <person name="Hannenhalli S."/>
            <person name="Turner R."/>
            <person name="Yooseph S."/>
            <person name="Lu F."/>
            <person name="Nusskern D.R."/>
            <person name="Shue B.C."/>
            <person name="Zheng X.H."/>
            <person name="Zhong F."/>
            <person name="Delcher A.L."/>
            <person name="Huson D.H."/>
            <person name="Kravitz S.A."/>
            <person name="Mouchard L."/>
            <person name="Reinert K."/>
            <person name="Remington K.A."/>
            <person name="Clark A.G."/>
            <person name="Waterman M.S."/>
            <person name="Eichler E.E."/>
            <person name="Adams M.D."/>
            <person name="Hunkapiller M.W."/>
            <person name="Myers E.W."/>
            <person name="Venter J.C."/>
        </authorList>
    </citation>
    <scope>NUCLEOTIDE SEQUENCE [LARGE SCALE GENOMIC DNA]</scope>
</reference>
<reference key="8">
    <citation type="journal article" date="2004" name="Genome Res.">
        <title>The status, quality, and expansion of the NIH full-length cDNA project: the Mammalian Gene Collection (MGC).</title>
        <authorList>
            <consortium name="The MGC Project Team"/>
        </authorList>
    </citation>
    <scope>NUCLEOTIDE SEQUENCE [LARGE SCALE MRNA] (ISOFORMS 1 AND 8)</scope>
    <source>
        <tissue>Brain</tissue>
    </source>
</reference>
<reference key="9">
    <citation type="journal article" date="2001" name="Eur. J. Biochem.">
        <title>Identification of novel splice variants of the human catalytic subunit Cbeta of cAMP-dependent protein kinase.</title>
        <authorList>
            <person name="Orstavik S."/>
            <person name="Reinton N."/>
            <person name="Frengen E."/>
            <person name="Langeland B.T."/>
            <person name="Jahnsen T."/>
            <person name="Skalhegg B.S."/>
        </authorList>
    </citation>
    <scope>NUCLEOTIDE SEQUENCE [MRNA] OF 1-30 (ISOFORMS 2; 5 AND 6)</scope>
    <scope>NUCLEOTIDE SEQUENCE [MRNA] OF 1-16 (ISOFORM 3)</scope>
    <scope>NUCLEOTIDE SEQUENCE [MRNA] OF 1-13 (ISOFORM 4)</scope>
    <scope>TISSUE SPECIFICITY</scope>
</reference>
<reference key="10">
    <citation type="journal article" date="2002" name="Oncogene">
        <title>c-MYC activates protein kinase A (PKA) by direct transcriptional activation of the PKA catalytic subunit beta (PKA-CB) gene.</title>
        <authorList>
            <person name="Wu K.-J."/>
            <person name="Mattioli M."/>
            <person name="Morse H.C."/>
            <person name="Dalla-Favera R."/>
        </authorList>
    </citation>
    <scope>NUCLEOTIDE SEQUENCE [MRNA] OF 1-15 (ISOFORM 1)</scope>
    <scope>FUNCTION</scope>
    <scope>CATALYTIC ACTIVITY</scope>
    <scope>COFACTOR</scope>
</reference>
<reference key="11">
    <citation type="journal article" date="2009" name="Sci. Signal.">
        <title>Quantitative phosphoproteomic analysis of T cell receptor signaling reveals system-wide modulation of protein-protein interactions.</title>
        <authorList>
            <person name="Mayya V."/>
            <person name="Lundgren D.H."/>
            <person name="Hwang S.-I."/>
            <person name="Rezaul K."/>
            <person name="Wu L."/>
            <person name="Eng J.K."/>
            <person name="Rodionov V."/>
            <person name="Han D.K."/>
        </authorList>
    </citation>
    <scope>IDENTIFICATION BY MASS SPECTROMETRY [LARGE SCALE ANALYSIS]</scope>
    <source>
        <tissue>Leukemic T-cell</tissue>
    </source>
</reference>
<reference key="12">
    <citation type="journal article" date="2011" name="BMC Syst. Biol.">
        <title>Initial characterization of the human central proteome.</title>
        <authorList>
            <person name="Burkard T.R."/>
            <person name="Planyavsky M."/>
            <person name="Kaupe I."/>
            <person name="Breitwieser F.P."/>
            <person name="Buerckstuemmer T."/>
            <person name="Bennett K.L."/>
            <person name="Superti-Furga G."/>
            <person name="Colinge J."/>
        </authorList>
    </citation>
    <scope>IDENTIFICATION BY MASS SPECTROMETRY [LARGE SCALE ANALYSIS]</scope>
</reference>
<reference key="13">
    <citation type="journal article" date="2011" name="J. Mol. Signal.">
        <title>G-patch domain and KOW motifs-containing protein, GPKOW; a nuclear RNA-binding protein regulated by protein kinase A.</title>
        <authorList>
            <person name="Aksaas A.K."/>
            <person name="Larsen A.C."/>
            <person name="Rogne M."/>
            <person name="Rosendal K."/>
            <person name="Kvissel A.K."/>
            <person name="Skaalhegg B.S."/>
        </authorList>
    </citation>
    <scope>FUNCTION</scope>
    <scope>INTERACTION WITH GPKOW</scope>
</reference>
<reference key="14">
    <citation type="journal article" date="2011" name="Nat. Cell Biol.">
        <title>Control of PKA stability and signalling by the RING ligase praja2.</title>
        <authorList>
            <person name="Lignitto L."/>
            <person name="Carlucci A."/>
            <person name="Sepe M."/>
            <person name="Stefan E."/>
            <person name="Cuomo O."/>
            <person name="Nistico R."/>
            <person name="Scorziello A."/>
            <person name="Savoia C."/>
            <person name="Garbi C."/>
            <person name="Annunziato L."/>
            <person name="Feliciello A."/>
        </authorList>
    </citation>
    <scope>FUNCTION</scope>
    <scope>SUBCELLULAR LOCATION</scope>
    <scope>INTERACTION WITH PJA2</scope>
</reference>
<reference key="15">
    <citation type="journal article" date="2014" name="J. Proteomics">
        <title>An enzyme assisted RP-RPLC approach for in-depth analysis of human liver phosphoproteome.</title>
        <authorList>
            <person name="Bian Y."/>
            <person name="Song C."/>
            <person name="Cheng K."/>
            <person name="Dong M."/>
            <person name="Wang F."/>
            <person name="Huang J."/>
            <person name="Sun D."/>
            <person name="Wang L."/>
            <person name="Ye M."/>
            <person name="Zou H."/>
        </authorList>
    </citation>
    <scope>IDENTIFICATION BY MASS SPECTROMETRY [LARGE SCALE ANALYSIS]</scope>
    <source>
        <tissue>Liver</tissue>
    </source>
</reference>
<reference key="16">
    <citation type="journal article" date="2014" name="Nat. Commun.">
        <title>Global profiling of co- and post-translationally N-myristoylated proteomes in human cells.</title>
        <authorList>
            <person name="Thinon E."/>
            <person name="Serwa R.A."/>
            <person name="Broncel M."/>
            <person name="Brannigan J.A."/>
            <person name="Brassat U."/>
            <person name="Wright M.H."/>
            <person name="Heal W.P."/>
            <person name="Wilkinson A.J."/>
            <person name="Mann D.J."/>
            <person name="Tate E.W."/>
        </authorList>
    </citation>
    <scope>MYRISTOYLATION AT GLY-2</scope>
    <scope>CLEAVAGE OF INITIATOR METHIONINE</scope>
    <scope>IDENTIFICATION BY MASS SPECTROMETRY</scope>
</reference>
<reference key="17">
    <citation type="journal article" date="2019" name="Elife">
        <title>GPCR signaling inhibits mTORC1 via PKA phosphorylation of Raptor.</title>
        <authorList>
            <person name="Jewell J.L."/>
            <person name="Fu V."/>
            <person name="Hong A.W."/>
            <person name="Yu F.X."/>
            <person name="Meng D."/>
            <person name="Melick C.H."/>
            <person name="Wang H."/>
            <person name="Lam W.M."/>
            <person name="Yuan H.X."/>
            <person name="Taylor S.S."/>
            <person name="Guan K.L."/>
        </authorList>
    </citation>
    <scope>FUNCTION</scope>
    <scope>CATALYTIC ACTIVITY</scope>
</reference>
<reference key="18">
    <citation type="journal article" date="2007" name="Nature">
        <title>Patterns of somatic mutation in human cancer genomes.</title>
        <authorList>
            <person name="Greenman C."/>
            <person name="Stephens P."/>
            <person name="Smith R."/>
            <person name="Dalgliesh G.L."/>
            <person name="Hunter C."/>
            <person name="Bignell G."/>
            <person name="Davies H."/>
            <person name="Teague J."/>
            <person name="Butler A."/>
            <person name="Stevens C."/>
            <person name="Edkins S."/>
            <person name="O'Meara S."/>
            <person name="Vastrik I."/>
            <person name="Schmidt E.E."/>
            <person name="Avis T."/>
            <person name="Barthorpe S."/>
            <person name="Bhamra G."/>
            <person name="Buck G."/>
            <person name="Choudhury B."/>
            <person name="Clements J."/>
            <person name="Cole J."/>
            <person name="Dicks E."/>
            <person name="Forbes S."/>
            <person name="Gray K."/>
            <person name="Halliday K."/>
            <person name="Harrison R."/>
            <person name="Hills K."/>
            <person name="Hinton J."/>
            <person name="Jenkinson A."/>
            <person name="Jones D."/>
            <person name="Menzies A."/>
            <person name="Mironenko T."/>
            <person name="Perry J."/>
            <person name="Raine K."/>
            <person name="Richardson D."/>
            <person name="Shepherd R."/>
            <person name="Small A."/>
            <person name="Tofts C."/>
            <person name="Varian J."/>
            <person name="Webb T."/>
            <person name="West S."/>
            <person name="Widaa S."/>
            <person name="Yates A."/>
            <person name="Cahill D.P."/>
            <person name="Louis D.N."/>
            <person name="Goldstraw P."/>
            <person name="Nicholson A.G."/>
            <person name="Brasseur F."/>
            <person name="Looijenga L."/>
            <person name="Weber B.L."/>
            <person name="Chiew Y.-E."/>
            <person name="DeFazio A."/>
            <person name="Greaves M.F."/>
            <person name="Green A.R."/>
            <person name="Campbell P."/>
            <person name="Birney E."/>
            <person name="Easton D.F."/>
            <person name="Chenevix-Trench G."/>
            <person name="Tan M.-H."/>
            <person name="Khoo S.K."/>
            <person name="Teh B.T."/>
            <person name="Yuen S.T."/>
            <person name="Leung S.Y."/>
            <person name="Wooster R."/>
            <person name="Futreal P.A."/>
            <person name="Stratton M.R."/>
        </authorList>
    </citation>
    <scope>VARIANT [LARGE SCALE ANALYSIS] GLN-106</scope>
</reference>
<reference key="19">
    <citation type="journal article" date="2020" name="Am. J. Hum. Genet.">
        <title>Germline and Mosaic Variants in PRKACA and PRKACB Cause a Multiple Congenital Malformation Syndrome.</title>
        <authorList>
            <person name="Palencia-Campos A."/>
            <person name="Aoto P.C."/>
            <person name="Machal E.M.F."/>
            <person name="Rivera-Barahona A."/>
            <person name="Soto-Bielicka P."/>
            <person name="Bertinetti D."/>
            <person name="Baker B."/>
            <person name="Vu L."/>
            <person name="Piceci-Sparascio F."/>
            <person name="Torrente I."/>
            <person name="Boudin E."/>
            <person name="Peeters S."/>
            <person name="Van Hul W."/>
            <person name="Huber C."/>
            <person name="Bonneau D."/>
            <person name="Hildebrand M.S."/>
            <person name="Coleman M."/>
            <person name="Bahlo M."/>
            <person name="Bennett M.F."/>
            <person name="Schneider A.L."/>
            <person name="Scheffer I.E."/>
            <person name="Kibaek M."/>
            <person name="Kristiansen B.S."/>
            <person name="Issa M.Y."/>
            <person name="Mehrez M.I."/>
            <person name="Ismail S."/>
            <person name="Tenorio J."/>
            <person name="Li G."/>
            <person name="Skaalhegg B.S."/>
            <person name="Otaify G.A."/>
            <person name="Temtamy S."/>
            <person name="Aglan M."/>
            <person name="Joench A.E."/>
            <person name="De Luca A."/>
            <person name="Mortier G."/>
            <person name="Cormier-Daire V."/>
            <person name="Ziegler A."/>
            <person name="Wallis M."/>
            <person name="Lapunzina P."/>
            <person name="Herberg F.W."/>
            <person name="Taylor S.S."/>
            <person name="Ruiz-Perez V.L."/>
        </authorList>
    </citation>
    <scope>VARIANTS CAFD2 LEU-54; ARG-88; ASN-88 AND ARG-235</scope>
    <scope>INVOLVEMENT IN CAFD2</scope>
    <scope>CHARACTERIZATION OF VARIANTS CAFD2 ARG-88 AND ARG-235</scope>
    <scope>INTERACTION WITH PRKAR1A AND PRKAR2B</scope>
    <scope>ACTIVITY REGULATION</scope>
</reference>
<name>KAPCB_HUMAN</name>
<protein>
    <recommendedName>
        <fullName>cAMP-dependent protein kinase catalytic subunit beta</fullName>
        <shortName>PKA C-beta</shortName>
        <ecNumber evidence="10 15">2.7.11.11</ecNumber>
    </recommendedName>
</protein>
<feature type="initiator methionine" description="Removed" evidence="14">
    <location>
        <position position="1"/>
    </location>
</feature>
<feature type="chain" id="PRO_0000086060" description="cAMP-dependent protein kinase catalytic subunit beta">
    <location>
        <begin position="2"/>
        <end position="351"/>
    </location>
</feature>
<feature type="domain" description="Protein kinase" evidence="6">
    <location>
        <begin position="44"/>
        <end position="298"/>
    </location>
</feature>
<feature type="domain" description="AGC-kinase C-terminal" evidence="7">
    <location>
        <begin position="299"/>
        <end position="351"/>
    </location>
</feature>
<feature type="active site" description="Proton acceptor" evidence="6 8">
    <location>
        <position position="167"/>
    </location>
</feature>
<feature type="binding site" evidence="6">
    <location>
        <begin position="50"/>
        <end position="58"/>
    </location>
    <ligand>
        <name>ATP</name>
        <dbReference type="ChEBI" id="CHEBI:30616"/>
    </ligand>
</feature>
<feature type="binding site" evidence="6">
    <location>
        <position position="73"/>
    </location>
    <ligand>
        <name>ATP</name>
        <dbReference type="ChEBI" id="CHEBI:30616"/>
    </ligand>
</feature>
<feature type="modified residue" description="Deamidated asparagine" evidence="3">
    <location>
        <position position="3"/>
    </location>
</feature>
<feature type="modified residue" description="Phosphoserine" evidence="2">
    <location>
        <position position="11"/>
    </location>
</feature>
<feature type="modified residue" description="Phosphotyrosine" evidence="4">
    <location>
        <position position="69"/>
    </location>
</feature>
<feature type="modified residue" description="Phosphoserine" evidence="2">
    <location>
        <position position="140"/>
    </location>
</feature>
<feature type="modified residue" description="Phosphothreonine" evidence="2">
    <location>
        <position position="198"/>
    </location>
</feature>
<feature type="modified residue" description="Phosphoserine" evidence="5">
    <location>
        <position position="322"/>
    </location>
</feature>
<feature type="modified residue" description="Phosphotyrosine" evidence="2">
    <location>
        <position position="331"/>
    </location>
</feature>
<feature type="modified residue" description="Phosphoserine" evidence="5">
    <location>
        <position position="339"/>
    </location>
</feature>
<feature type="lipid moiety-binding region" description="N-myristoyl glycine" evidence="14">
    <location>
        <position position="2"/>
    </location>
</feature>
<feature type="splice variant" id="VSP_017364" description="In isoform 2." evidence="17 20">
    <original>MGNAATAKKGSEVESV</original>
    <variation>MAAYREPPCNQYTGTTTALQKLEGFASRLFHRHSKGTAHDQKTALENDSLHFSEHTALWDRSM</variation>
    <location>
        <begin position="1"/>
        <end position="16"/>
    </location>
</feature>
<feature type="splice variant" id="VSP_017365" description="In isoform 6." evidence="17 21">
    <original>MGNAATAKKGSEVES</original>
    <variation>MSARKSSDASACSSSEISDSF</variation>
    <location>
        <begin position="1"/>
        <end position="15"/>
    </location>
</feature>
<feature type="splice variant" id="VSP_043372" description="In isoform 9." evidence="18">
    <original>MGNAATAKKGSEVES</original>
    <variation>MGLSRKSSDASACSSSEISDSF</variation>
    <location>
        <begin position="1"/>
        <end position="15"/>
    </location>
</feature>
<feature type="splice variant" id="VSP_017366" description="In isoform 5 and isoform 10." evidence="17 18">
    <original>MGNAATAKKGSEVE</original>
    <variation>MSARKSSDASACSSSEI</variation>
    <location>
        <begin position="1"/>
        <end position="14"/>
    </location>
</feature>
<feature type="splice variant" id="VSP_017367" description="In isoform 7." evidence="20">
    <original>MGNAATAKKGSEVE</original>
    <variation>MGLSRKSSDASACSSSEI</variation>
    <location>
        <begin position="1"/>
        <end position="14"/>
    </location>
</feature>
<feature type="splice variant" id="VSP_017368" description="In isoform 4." evidence="17">
    <location>
        <begin position="1"/>
        <end position="13"/>
    </location>
</feature>
<feature type="splice variant" id="VSP_017369" description="In isoform 3." evidence="17 18">
    <location>
        <begin position="1"/>
        <end position="12"/>
    </location>
</feature>
<feature type="splice variant" id="VSP_017370" description="In isoform 3." evidence="17 18">
    <original>VESV</original>
    <variation>MGLL</variation>
    <location>
        <begin position="13"/>
        <end position="16"/>
    </location>
</feature>
<feature type="splice variant" id="VSP_017371" description="In isoform 4." evidence="17">
    <original>E</original>
    <variation>M</variation>
    <location>
        <position position="14"/>
    </location>
</feature>
<feature type="splice variant" id="VSP_046238" description="In isoform 10." evidence="18">
    <location>
        <begin position="79"/>
        <end position="111"/>
    </location>
</feature>
<feature type="splice variant" id="VSP_036556" description="In isoform 8." evidence="19">
    <original>VR</original>
    <variation>NF</variation>
    <location>
        <begin position="256"/>
        <end position="257"/>
    </location>
</feature>
<feature type="splice variant" id="VSP_036557" description="In isoform 8." evidence="19">
    <location>
        <begin position="258"/>
        <end position="351"/>
    </location>
</feature>
<feature type="sequence variant" id="VAR_085199" description="In CAFD2; dbSNP:rs1663748771." evidence="16">
    <original>S</original>
    <variation>L</variation>
    <location>
        <position position="54"/>
    </location>
</feature>
<feature type="sequence variant" id="VAR_085200" description="In CAFD2; dbSNP:rs748898273." evidence="16">
    <original>H</original>
    <variation>N</variation>
    <location>
        <position position="88"/>
    </location>
</feature>
<feature type="sequence variant" id="VAR_085201" description="In CAFD2; increased sensitivity to cAMP activation; dbSNP:rs768056300." evidence="16">
    <original>H</original>
    <variation>R</variation>
    <location>
        <position position="88"/>
    </location>
</feature>
<feature type="sequence variant" id="VAR_040594" description="In dbSNP:rs36117118." evidence="11">
    <original>R</original>
    <variation>Q</variation>
    <location>
        <position position="106"/>
    </location>
</feature>
<feature type="sequence variant" id="VAR_085202" description="In CAFD2; increased sensitivity to cAMP activation; decreased interaction with regulatory subunits PRKAR1A and PRKAR2B; dbSNP:rs1670492319." evidence="16">
    <original>G</original>
    <variation>R</variation>
    <location>
        <position position="235"/>
    </location>
</feature>
<feature type="sequence conflict" description="In Ref. 3; CAI56774." evidence="22" ref="3">
    <original>V</original>
    <variation>G</variation>
    <location>
        <position position="80"/>
    </location>
</feature>
<feature type="sequence conflict" description="In Ref. 8; AAH35058." evidence="22" ref="8">
    <original>H</original>
    <variation>N</variation>
    <location>
        <position position="159"/>
    </location>
</feature>
<feature type="sequence conflict" description="In Ref. 8; AAH35058." evidence="22" ref="8">
    <original>L</original>
    <variation>I</variation>
    <location>
        <position position="163"/>
    </location>
</feature>
<feature type="sequence conflict" description="In Ref. 3; CAI56774." evidence="22" ref="3">
    <original>A</original>
    <variation>V</variation>
    <location>
        <position position="233"/>
    </location>
</feature>
<feature type="sequence conflict" description="In Ref. 8; AAH35058." evidence="22" ref="8">
    <original>H</original>
    <variation>N</variation>
    <location>
        <position position="261"/>
    </location>
</feature>
<accession>P22694</accession>
<accession>B1APG4</accession>
<accession>B4DKB0</accession>
<accession>B4E2Q1</accession>
<accession>Q14VH1</accession>
<accession>Q59GC0</accession>
<accession>Q5BNE9</accession>
<accession>Q5BNF0</accession>
<accession>Q5BNF1</accession>
<accession>Q5BNF2</accession>
<accession>Q5BNF3</accession>
<accession>Q5CZ92</accession>
<accession>Q5T1K3</accession>
<accession>Q7Z3M1</accession>
<accession>Q8IYR5</accession>
<accession>Q8IZQ0</accession>
<accession>Q96B09</accession>
<gene>
    <name type="primary">PRKACB</name>
</gene>
<keyword id="KW-0025">Alternative splicing</keyword>
<keyword id="KW-0067">ATP-binding</keyword>
<keyword id="KW-0114">cAMP</keyword>
<keyword id="KW-1003">Cell membrane</keyword>
<keyword id="KW-0963">Cytoplasm</keyword>
<keyword id="KW-0225">Disease variant</keyword>
<keyword id="KW-0418">Kinase</keyword>
<keyword id="KW-0449">Lipoprotein</keyword>
<keyword id="KW-0472">Membrane</keyword>
<keyword id="KW-0519">Myristate</keyword>
<keyword id="KW-0547">Nucleotide-binding</keyword>
<keyword id="KW-0539">Nucleus</keyword>
<keyword id="KW-0597">Phosphoprotein</keyword>
<keyword id="KW-1267">Proteomics identification</keyword>
<keyword id="KW-1185">Reference proteome</keyword>
<keyword id="KW-0723">Serine/threonine-protein kinase</keyword>
<keyword id="KW-0808">Transferase</keyword>